<protein>
    <recommendedName>
        <fullName>F-box/kelch-repeat protein At5g03020</fullName>
    </recommendedName>
</protein>
<gene>
    <name type="ordered locus">At5g03020</name>
    <name type="ORF">F15A17.50</name>
</gene>
<organism>
    <name type="scientific">Arabidopsis thaliana</name>
    <name type="common">Mouse-ear cress</name>
    <dbReference type="NCBI Taxonomy" id="3702"/>
    <lineage>
        <taxon>Eukaryota</taxon>
        <taxon>Viridiplantae</taxon>
        <taxon>Streptophyta</taxon>
        <taxon>Embryophyta</taxon>
        <taxon>Tracheophyta</taxon>
        <taxon>Spermatophyta</taxon>
        <taxon>Magnoliopsida</taxon>
        <taxon>eudicotyledons</taxon>
        <taxon>Gunneridae</taxon>
        <taxon>Pentapetalae</taxon>
        <taxon>rosids</taxon>
        <taxon>malvids</taxon>
        <taxon>Brassicales</taxon>
        <taxon>Brassicaceae</taxon>
        <taxon>Camelineae</taxon>
        <taxon>Arabidopsis</taxon>
    </lineage>
</organism>
<accession>Q9LYY3</accession>
<accession>Q8GX75</accession>
<name>FK110_ARATH</name>
<dbReference type="EMBL" id="AL163002">
    <property type="protein sequence ID" value="CAB86069.1"/>
    <property type="molecule type" value="Genomic_DNA"/>
</dbReference>
<dbReference type="EMBL" id="CP002688">
    <property type="protein sequence ID" value="AED90546.1"/>
    <property type="molecule type" value="Genomic_DNA"/>
</dbReference>
<dbReference type="EMBL" id="AK118398">
    <property type="protein sequence ID" value="BAC43007.1"/>
    <property type="molecule type" value="mRNA"/>
</dbReference>
<dbReference type="EMBL" id="BT005319">
    <property type="protein sequence ID" value="AAO63383.1"/>
    <property type="molecule type" value="mRNA"/>
</dbReference>
<dbReference type="PIR" id="T48323">
    <property type="entry name" value="T48323"/>
</dbReference>
<dbReference type="RefSeq" id="NP_195922.1">
    <property type="nucleotide sequence ID" value="NM_120380.2"/>
</dbReference>
<dbReference type="SMR" id="Q9LYY3"/>
<dbReference type="STRING" id="3702.Q9LYY3"/>
<dbReference type="PaxDb" id="3702-AT5G03020.1"/>
<dbReference type="EnsemblPlants" id="AT5G03020.1">
    <property type="protein sequence ID" value="AT5G03020.1"/>
    <property type="gene ID" value="AT5G03020"/>
</dbReference>
<dbReference type="GeneID" id="831706"/>
<dbReference type="Gramene" id="AT5G03020.1">
    <property type="protein sequence ID" value="AT5G03020.1"/>
    <property type="gene ID" value="AT5G03020"/>
</dbReference>
<dbReference type="KEGG" id="ath:AT5G03020"/>
<dbReference type="Araport" id="AT5G03020"/>
<dbReference type="TAIR" id="AT5G03020"/>
<dbReference type="eggNOG" id="KOG1072">
    <property type="taxonomic scope" value="Eukaryota"/>
</dbReference>
<dbReference type="HOGENOM" id="CLU_032521_1_2_1"/>
<dbReference type="InParanoid" id="Q9LYY3"/>
<dbReference type="OMA" id="NTEIWCA"/>
<dbReference type="PhylomeDB" id="Q9LYY3"/>
<dbReference type="PRO" id="PR:Q9LYY3"/>
<dbReference type="Proteomes" id="UP000006548">
    <property type="component" value="Chromosome 5"/>
</dbReference>
<dbReference type="ExpressionAtlas" id="Q9LYY3">
    <property type="expression patterns" value="baseline and differential"/>
</dbReference>
<dbReference type="CDD" id="cd22152">
    <property type="entry name" value="F-box_AtAFR-like"/>
    <property type="match status" value="1"/>
</dbReference>
<dbReference type="Gene3D" id="2.120.10.80">
    <property type="entry name" value="Kelch-type beta propeller"/>
    <property type="match status" value="1"/>
</dbReference>
<dbReference type="InterPro" id="IPR050354">
    <property type="entry name" value="F-box/kelch-repeat_ARATH"/>
</dbReference>
<dbReference type="InterPro" id="IPR001810">
    <property type="entry name" value="F-box_dom"/>
</dbReference>
<dbReference type="InterPro" id="IPR015915">
    <property type="entry name" value="Kelch-typ_b-propeller"/>
</dbReference>
<dbReference type="InterPro" id="IPR006652">
    <property type="entry name" value="Kelch_1"/>
</dbReference>
<dbReference type="PANTHER" id="PTHR24414:SF196">
    <property type="entry name" value="BNACNNG12250D PROTEIN"/>
    <property type="match status" value="1"/>
</dbReference>
<dbReference type="PANTHER" id="PTHR24414">
    <property type="entry name" value="F-BOX/KELCH-REPEAT PROTEIN SKIP4"/>
    <property type="match status" value="1"/>
</dbReference>
<dbReference type="Pfam" id="PF00646">
    <property type="entry name" value="F-box"/>
    <property type="match status" value="1"/>
</dbReference>
<dbReference type="Pfam" id="PF25210">
    <property type="entry name" value="Kelch_FKB95"/>
    <property type="match status" value="1"/>
</dbReference>
<dbReference type="SMART" id="SM00612">
    <property type="entry name" value="Kelch"/>
    <property type="match status" value="2"/>
</dbReference>
<dbReference type="SUPFAM" id="SSF117281">
    <property type="entry name" value="Kelch motif"/>
    <property type="match status" value="1"/>
</dbReference>
<keyword id="KW-0880">Kelch repeat</keyword>
<keyword id="KW-1185">Reference proteome</keyword>
<keyword id="KW-0677">Repeat</keyword>
<reference key="1">
    <citation type="journal article" date="2000" name="Nature">
        <title>Sequence and analysis of chromosome 5 of the plant Arabidopsis thaliana.</title>
        <authorList>
            <person name="Tabata S."/>
            <person name="Kaneko T."/>
            <person name="Nakamura Y."/>
            <person name="Kotani H."/>
            <person name="Kato T."/>
            <person name="Asamizu E."/>
            <person name="Miyajima N."/>
            <person name="Sasamoto S."/>
            <person name="Kimura T."/>
            <person name="Hosouchi T."/>
            <person name="Kawashima K."/>
            <person name="Kohara M."/>
            <person name="Matsumoto M."/>
            <person name="Matsuno A."/>
            <person name="Muraki A."/>
            <person name="Nakayama S."/>
            <person name="Nakazaki N."/>
            <person name="Naruo K."/>
            <person name="Okumura S."/>
            <person name="Shinpo S."/>
            <person name="Takeuchi C."/>
            <person name="Wada T."/>
            <person name="Watanabe A."/>
            <person name="Yamada M."/>
            <person name="Yasuda M."/>
            <person name="Sato S."/>
            <person name="de la Bastide M."/>
            <person name="Huang E."/>
            <person name="Spiegel L."/>
            <person name="Gnoj L."/>
            <person name="O'Shaughnessy A."/>
            <person name="Preston R."/>
            <person name="Habermann K."/>
            <person name="Murray J."/>
            <person name="Johnson D."/>
            <person name="Rohlfing T."/>
            <person name="Nelson J."/>
            <person name="Stoneking T."/>
            <person name="Pepin K."/>
            <person name="Spieth J."/>
            <person name="Sekhon M."/>
            <person name="Armstrong J."/>
            <person name="Becker M."/>
            <person name="Belter E."/>
            <person name="Cordum H."/>
            <person name="Cordes M."/>
            <person name="Courtney L."/>
            <person name="Courtney W."/>
            <person name="Dante M."/>
            <person name="Du H."/>
            <person name="Edwards J."/>
            <person name="Fryman J."/>
            <person name="Haakensen B."/>
            <person name="Lamar E."/>
            <person name="Latreille P."/>
            <person name="Leonard S."/>
            <person name="Meyer R."/>
            <person name="Mulvaney E."/>
            <person name="Ozersky P."/>
            <person name="Riley A."/>
            <person name="Strowmatt C."/>
            <person name="Wagner-McPherson C."/>
            <person name="Wollam A."/>
            <person name="Yoakum M."/>
            <person name="Bell M."/>
            <person name="Dedhia N."/>
            <person name="Parnell L."/>
            <person name="Shah R."/>
            <person name="Rodriguez M."/>
            <person name="Hoon See L."/>
            <person name="Vil D."/>
            <person name="Baker J."/>
            <person name="Kirchoff K."/>
            <person name="Toth K."/>
            <person name="King L."/>
            <person name="Bahret A."/>
            <person name="Miller B."/>
            <person name="Marra M.A."/>
            <person name="Martienssen R."/>
            <person name="McCombie W.R."/>
            <person name="Wilson R.K."/>
            <person name="Murphy G."/>
            <person name="Bancroft I."/>
            <person name="Volckaert G."/>
            <person name="Wambutt R."/>
            <person name="Duesterhoeft A."/>
            <person name="Stiekema W."/>
            <person name="Pohl T."/>
            <person name="Entian K.-D."/>
            <person name="Terryn N."/>
            <person name="Hartley N."/>
            <person name="Bent E."/>
            <person name="Johnson S."/>
            <person name="Langham S.-A."/>
            <person name="McCullagh B."/>
            <person name="Robben J."/>
            <person name="Grymonprez B."/>
            <person name="Zimmermann W."/>
            <person name="Ramsperger U."/>
            <person name="Wedler H."/>
            <person name="Balke K."/>
            <person name="Wedler E."/>
            <person name="Peters S."/>
            <person name="van Staveren M."/>
            <person name="Dirkse W."/>
            <person name="Mooijman P."/>
            <person name="Klein Lankhorst R."/>
            <person name="Weitzenegger T."/>
            <person name="Bothe G."/>
            <person name="Rose M."/>
            <person name="Hauf J."/>
            <person name="Berneiser S."/>
            <person name="Hempel S."/>
            <person name="Feldpausch M."/>
            <person name="Lamberth S."/>
            <person name="Villarroel R."/>
            <person name="Gielen J."/>
            <person name="Ardiles W."/>
            <person name="Bents O."/>
            <person name="Lemcke K."/>
            <person name="Kolesov G."/>
            <person name="Mayer K.F.X."/>
            <person name="Rudd S."/>
            <person name="Schoof H."/>
            <person name="Schueller C."/>
            <person name="Zaccaria P."/>
            <person name="Mewes H.-W."/>
            <person name="Bevan M."/>
            <person name="Fransz P.F."/>
        </authorList>
    </citation>
    <scope>NUCLEOTIDE SEQUENCE [LARGE SCALE GENOMIC DNA]</scope>
    <source>
        <strain>cv. Columbia</strain>
    </source>
</reference>
<reference key="2">
    <citation type="journal article" date="2017" name="Plant J.">
        <title>Araport11: a complete reannotation of the Arabidopsis thaliana reference genome.</title>
        <authorList>
            <person name="Cheng C.Y."/>
            <person name="Krishnakumar V."/>
            <person name="Chan A.P."/>
            <person name="Thibaud-Nissen F."/>
            <person name="Schobel S."/>
            <person name="Town C.D."/>
        </authorList>
    </citation>
    <scope>GENOME REANNOTATION</scope>
    <source>
        <strain>cv. Columbia</strain>
    </source>
</reference>
<reference key="3">
    <citation type="journal article" date="2002" name="Science">
        <title>Functional annotation of a full-length Arabidopsis cDNA collection.</title>
        <authorList>
            <person name="Seki M."/>
            <person name="Narusaka M."/>
            <person name="Kamiya A."/>
            <person name="Ishida J."/>
            <person name="Satou M."/>
            <person name="Sakurai T."/>
            <person name="Nakajima M."/>
            <person name="Enju A."/>
            <person name="Akiyama K."/>
            <person name="Oono Y."/>
            <person name="Muramatsu M."/>
            <person name="Hayashizaki Y."/>
            <person name="Kawai J."/>
            <person name="Carninci P."/>
            <person name="Itoh M."/>
            <person name="Ishii Y."/>
            <person name="Arakawa T."/>
            <person name="Shibata K."/>
            <person name="Shinagawa A."/>
            <person name="Shinozaki K."/>
        </authorList>
    </citation>
    <scope>NUCLEOTIDE SEQUENCE [LARGE SCALE MRNA]</scope>
    <source>
        <strain>cv. Columbia</strain>
    </source>
</reference>
<reference key="4">
    <citation type="journal article" date="2003" name="Science">
        <title>Empirical analysis of transcriptional activity in the Arabidopsis genome.</title>
        <authorList>
            <person name="Yamada K."/>
            <person name="Lim J."/>
            <person name="Dale J.M."/>
            <person name="Chen H."/>
            <person name="Shinn P."/>
            <person name="Palm C.J."/>
            <person name="Southwick A.M."/>
            <person name="Wu H.C."/>
            <person name="Kim C.J."/>
            <person name="Nguyen M."/>
            <person name="Pham P.K."/>
            <person name="Cheuk R.F."/>
            <person name="Karlin-Newmann G."/>
            <person name="Liu S.X."/>
            <person name="Lam B."/>
            <person name="Sakano H."/>
            <person name="Wu T."/>
            <person name="Yu G."/>
            <person name="Miranda M."/>
            <person name="Quach H.L."/>
            <person name="Tripp M."/>
            <person name="Chang C.H."/>
            <person name="Lee J.M."/>
            <person name="Toriumi M.J."/>
            <person name="Chan M.M."/>
            <person name="Tang C.C."/>
            <person name="Onodera C.S."/>
            <person name="Deng J.M."/>
            <person name="Akiyama K."/>
            <person name="Ansari Y."/>
            <person name="Arakawa T."/>
            <person name="Banh J."/>
            <person name="Banno F."/>
            <person name="Bowser L."/>
            <person name="Brooks S.Y."/>
            <person name="Carninci P."/>
            <person name="Chao Q."/>
            <person name="Choy N."/>
            <person name="Enju A."/>
            <person name="Goldsmith A.D."/>
            <person name="Gurjal M."/>
            <person name="Hansen N.F."/>
            <person name="Hayashizaki Y."/>
            <person name="Johnson-Hopson C."/>
            <person name="Hsuan V.W."/>
            <person name="Iida K."/>
            <person name="Karnes M."/>
            <person name="Khan S."/>
            <person name="Koesema E."/>
            <person name="Ishida J."/>
            <person name="Jiang P.X."/>
            <person name="Jones T."/>
            <person name="Kawai J."/>
            <person name="Kamiya A."/>
            <person name="Meyers C."/>
            <person name="Nakajima M."/>
            <person name="Narusaka M."/>
            <person name="Seki M."/>
            <person name="Sakurai T."/>
            <person name="Satou M."/>
            <person name="Tamse R."/>
            <person name="Vaysberg M."/>
            <person name="Wallender E.K."/>
            <person name="Wong C."/>
            <person name="Yamamura Y."/>
            <person name="Yuan S."/>
            <person name="Shinozaki K."/>
            <person name="Davis R.W."/>
            <person name="Theologis A."/>
            <person name="Ecker J.R."/>
        </authorList>
    </citation>
    <scope>NUCLEOTIDE SEQUENCE [LARGE SCALE MRNA]</scope>
    <source>
        <strain>cv. Columbia</strain>
    </source>
</reference>
<proteinExistence type="evidence at transcript level"/>
<evidence type="ECO:0000256" key="1">
    <source>
        <dbReference type="SAM" id="MobiDB-lite"/>
    </source>
</evidence>
<evidence type="ECO:0000305" key="2"/>
<sequence>MTEEMSKESPPPPPTSFSSLPDDVALDCRARISRFHYPTLSLVSKGFRTLIASPELEATRSFIGKPENHLCVCLRLYKNPNPLWFIFSPIPKQKLKPIVPWFPNQQYPQYPTVVSNGSQIYIIGGFVRRRRSNRVSIFDYRTYQWRRLPKMRQPRVYPAASVIDGKIYVIGGFRGSMPTDIENSGEVYDPKTNTWEPILLTSLDLTVQNVFKKKHYFTTKACLVINKVSCLLYVSDGKLYWREDKEGFECRKVYGLAEQSSNLFRVVANSGGGGRVTVWWKSMTKGCEFDCLLTEECETKIWCAEISLERRGLRELRGFVEWSKEVFTIDRCDYIYDFISQYVTVTY</sequence>
<feature type="chain" id="PRO_0000283266" description="F-box/kelch-repeat protein At5g03020">
    <location>
        <begin position="1"/>
        <end position="347"/>
    </location>
</feature>
<feature type="domain" description="F-box">
    <location>
        <begin position="14"/>
        <end position="62"/>
    </location>
</feature>
<feature type="repeat" description="Kelch 1">
    <location>
        <begin position="119"/>
        <end position="165"/>
    </location>
</feature>
<feature type="repeat" description="Kelch 2">
    <location>
        <begin position="167"/>
        <end position="215"/>
    </location>
</feature>
<feature type="region of interest" description="Disordered" evidence="1">
    <location>
        <begin position="1"/>
        <end position="21"/>
    </location>
</feature>
<feature type="sequence conflict" description="In Ref. 3; BAC43007 and 4; AAO63383." evidence="2" ref="3 4">
    <original>D</original>
    <variation>G</variation>
    <location>
        <position position="290"/>
    </location>
</feature>